<sequence length="148" mass="16046">MPKLLLLHGPNLNRLGTREPERYGRLTLQDIETRLRSICDAAGVQLCSAQSNHEGELIDRIHAAADEGVEFIVINPAALTHTSVGLRDALLAVALPFIEVHLSNVHAREAFRQHSYLSDIAEGVITGLGADGYDFAARAAIRRMGGQA</sequence>
<reference key="1">
    <citation type="submission" date="2006-12" db="EMBL/GenBank/DDBJ databases">
        <title>Complete sequence of Halorhodospira halophila SL1.</title>
        <authorList>
            <consortium name="US DOE Joint Genome Institute"/>
            <person name="Copeland A."/>
            <person name="Lucas S."/>
            <person name="Lapidus A."/>
            <person name="Barry K."/>
            <person name="Detter J.C."/>
            <person name="Glavina del Rio T."/>
            <person name="Hammon N."/>
            <person name="Israni S."/>
            <person name="Dalin E."/>
            <person name="Tice H."/>
            <person name="Pitluck S."/>
            <person name="Saunders E."/>
            <person name="Brettin T."/>
            <person name="Bruce D."/>
            <person name="Han C."/>
            <person name="Tapia R."/>
            <person name="Schmutz J."/>
            <person name="Larimer F."/>
            <person name="Land M."/>
            <person name="Hauser L."/>
            <person name="Kyrpides N."/>
            <person name="Mikhailova N."/>
            <person name="Hoff W."/>
            <person name="Richardson P."/>
        </authorList>
    </citation>
    <scope>NUCLEOTIDE SEQUENCE [LARGE SCALE GENOMIC DNA]</scope>
    <source>
        <strain>DSM 244 / SL1</strain>
    </source>
</reference>
<keyword id="KW-0028">Amino-acid biosynthesis</keyword>
<keyword id="KW-0057">Aromatic amino acid biosynthesis</keyword>
<keyword id="KW-0456">Lyase</keyword>
<keyword id="KW-1185">Reference proteome</keyword>
<organism>
    <name type="scientific">Halorhodospira halophila (strain DSM 244 / SL1)</name>
    <name type="common">Ectothiorhodospira halophila (strain DSM 244 / SL1)</name>
    <dbReference type="NCBI Taxonomy" id="349124"/>
    <lineage>
        <taxon>Bacteria</taxon>
        <taxon>Pseudomonadati</taxon>
        <taxon>Pseudomonadota</taxon>
        <taxon>Gammaproteobacteria</taxon>
        <taxon>Chromatiales</taxon>
        <taxon>Ectothiorhodospiraceae</taxon>
        <taxon>Halorhodospira</taxon>
    </lineage>
</organism>
<comment type="function">
    <text evidence="1">Catalyzes a trans-dehydration via an enolate intermediate.</text>
</comment>
<comment type="catalytic activity">
    <reaction evidence="1">
        <text>3-dehydroquinate = 3-dehydroshikimate + H2O</text>
        <dbReference type="Rhea" id="RHEA:21096"/>
        <dbReference type="ChEBI" id="CHEBI:15377"/>
        <dbReference type="ChEBI" id="CHEBI:16630"/>
        <dbReference type="ChEBI" id="CHEBI:32364"/>
        <dbReference type="EC" id="4.2.1.10"/>
    </reaction>
</comment>
<comment type="pathway">
    <text evidence="1">Metabolic intermediate biosynthesis; chorismate biosynthesis; chorismate from D-erythrose 4-phosphate and phosphoenolpyruvate: step 3/7.</text>
</comment>
<comment type="subunit">
    <text evidence="1">Homododecamer.</text>
</comment>
<comment type="similarity">
    <text evidence="1">Belongs to the type-II 3-dehydroquinase family.</text>
</comment>
<feature type="chain" id="PRO_1000023473" description="3-dehydroquinate dehydratase">
    <location>
        <begin position="1"/>
        <end position="148"/>
    </location>
</feature>
<feature type="active site" description="Proton acceptor" evidence="1">
    <location>
        <position position="23"/>
    </location>
</feature>
<feature type="active site" description="Proton donor" evidence="1">
    <location>
        <position position="101"/>
    </location>
</feature>
<feature type="binding site" evidence="1">
    <location>
        <position position="75"/>
    </location>
    <ligand>
        <name>substrate</name>
    </ligand>
</feature>
<feature type="binding site" evidence="1">
    <location>
        <position position="81"/>
    </location>
    <ligand>
        <name>substrate</name>
    </ligand>
</feature>
<feature type="binding site" evidence="1">
    <location>
        <position position="88"/>
    </location>
    <ligand>
        <name>substrate</name>
    </ligand>
</feature>
<feature type="binding site" evidence="1">
    <location>
        <begin position="102"/>
        <end position="103"/>
    </location>
    <ligand>
        <name>substrate</name>
    </ligand>
</feature>
<feature type="binding site" evidence="1">
    <location>
        <position position="112"/>
    </location>
    <ligand>
        <name>substrate</name>
    </ligand>
</feature>
<feature type="site" description="Transition state stabilizer" evidence="1">
    <location>
        <position position="18"/>
    </location>
</feature>
<gene>
    <name evidence="1" type="primary">aroQ</name>
    <name type="ordered locus">Hhal_2337</name>
</gene>
<evidence type="ECO:0000255" key="1">
    <source>
        <dbReference type="HAMAP-Rule" id="MF_00169"/>
    </source>
</evidence>
<dbReference type="EC" id="4.2.1.10" evidence="1"/>
<dbReference type="EMBL" id="CP000544">
    <property type="protein sequence ID" value="ABM63100.1"/>
    <property type="molecule type" value="Genomic_DNA"/>
</dbReference>
<dbReference type="RefSeq" id="WP_011815122.1">
    <property type="nucleotide sequence ID" value="NC_008789.1"/>
</dbReference>
<dbReference type="SMR" id="A1WZI8"/>
<dbReference type="STRING" id="349124.Hhal_2337"/>
<dbReference type="KEGG" id="hha:Hhal_2337"/>
<dbReference type="eggNOG" id="COG0757">
    <property type="taxonomic scope" value="Bacteria"/>
</dbReference>
<dbReference type="HOGENOM" id="CLU_090968_1_0_6"/>
<dbReference type="OrthoDB" id="9790793at2"/>
<dbReference type="UniPathway" id="UPA00053">
    <property type="reaction ID" value="UER00086"/>
</dbReference>
<dbReference type="Proteomes" id="UP000000647">
    <property type="component" value="Chromosome"/>
</dbReference>
<dbReference type="GO" id="GO:0003855">
    <property type="term" value="F:3-dehydroquinate dehydratase activity"/>
    <property type="evidence" value="ECO:0007669"/>
    <property type="project" value="UniProtKB-UniRule"/>
</dbReference>
<dbReference type="GO" id="GO:0008652">
    <property type="term" value="P:amino acid biosynthetic process"/>
    <property type="evidence" value="ECO:0007669"/>
    <property type="project" value="UniProtKB-KW"/>
</dbReference>
<dbReference type="GO" id="GO:0009073">
    <property type="term" value="P:aromatic amino acid family biosynthetic process"/>
    <property type="evidence" value="ECO:0007669"/>
    <property type="project" value="UniProtKB-KW"/>
</dbReference>
<dbReference type="GO" id="GO:0009423">
    <property type="term" value="P:chorismate biosynthetic process"/>
    <property type="evidence" value="ECO:0007669"/>
    <property type="project" value="UniProtKB-UniRule"/>
</dbReference>
<dbReference type="GO" id="GO:0019631">
    <property type="term" value="P:quinate catabolic process"/>
    <property type="evidence" value="ECO:0007669"/>
    <property type="project" value="TreeGrafter"/>
</dbReference>
<dbReference type="CDD" id="cd00466">
    <property type="entry name" value="DHQase_II"/>
    <property type="match status" value="1"/>
</dbReference>
<dbReference type="Gene3D" id="3.40.50.9100">
    <property type="entry name" value="Dehydroquinase, class II"/>
    <property type="match status" value="1"/>
</dbReference>
<dbReference type="HAMAP" id="MF_00169">
    <property type="entry name" value="AroQ"/>
    <property type="match status" value="1"/>
</dbReference>
<dbReference type="InterPro" id="IPR001874">
    <property type="entry name" value="DHquinase_II"/>
</dbReference>
<dbReference type="InterPro" id="IPR018509">
    <property type="entry name" value="DHquinase_II_CS"/>
</dbReference>
<dbReference type="InterPro" id="IPR036441">
    <property type="entry name" value="DHquinase_II_sf"/>
</dbReference>
<dbReference type="NCBIfam" id="TIGR01088">
    <property type="entry name" value="aroQ"/>
    <property type="match status" value="1"/>
</dbReference>
<dbReference type="NCBIfam" id="NF003804">
    <property type="entry name" value="PRK05395.1-1"/>
    <property type="match status" value="1"/>
</dbReference>
<dbReference type="NCBIfam" id="NF003805">
    <property type="entry name" value="PRK05395.1-2"/>
    <property type="match status" value="1"/>
</dbReference>
<dbReference type="NCBIfam" id="NF003806">
    <property type="entry name" value="PRK05395.1-3"/>
    <property type="match status" value="1"/>
</dbReference>
<dbReference type="NCBIfam" id="NF003807">
    <property type="entry name" value="PRK05395.1-4"/>
    <property type="match status" value="1"/>
</dbReference>
<dbReference type="PANTHER" id="PTHR21272">
    <property type="entry name" value="CATABOLIC 3-DEHYDROQUINASE"/>
    <property type="match status" value="1"/>
</dbReference>
<dbReference type="PANTHER" id="PTHR21272:SF3">
    <property type="entry name" value="CATABOLIC 3-DEHYDROQUINASE"/>
    <property type="match status" value="1"/>
</dbReference>
<dbReference type="Pfam" id="PF01220">
    <property type="entry name" value="DHquinase_II"/>
    <property type="match status" value="1"/>
</dbReference>
<dbReference type="PIRSF" id="PIRSF001399">
    <property type="entry name" value="DHquinase_II"/>
    <property type="match status" value="1"/>
</dbReference>
<dbReference type="SUPFAM" id="SSF52304">
    <property type="entry name" value="Type II 3-dehydroquinate dehydratase"/>
    <property type="match status" value="1"/>
</dbReference>
<dbReference type="PROSITE" id="PS01029">
    <property type="entry name" value="DEHYDROQUINASE_II"/>
    <property type="match status" value="1"/>
</dbReference>
<accession>A1WZI8</accession>
<name>AROQ_HALHL</name>
<proteinExistence type="inferred from homology"/>
<protein>
    <recommendedName>
        <fullName evidence="1">3-dehydroquinate dehydratase</fullName>
        <shortName evidence="1">3-dehydroquinase</shortName>
        <ecNumber evidence="1">4.2.1.10</ecNumber>
    </recommendedName>
    <alternativeName>
        <fullName evidence="1">Type II DHQase</fullName>
    </alternativeName>
</protein>